<comment type="function">
    <text evidence="1">Hydrolyzes ureidoacrylate to form aminoacrylate and carbamate. The carbamate hydrolyzes spontaneously, thereby releasing one of the nitrogen atoms of the pyrimidine ring as ammonia and one of its carbon atoms as CO2.</text>
</comment>
<comment type="catalytic activity">
    <reaction evidence="1">
        <text>(Z)-3-ureidoacrylate + H2O + H(+) = (Z)-3-aminoacrylate + NH4(+) + CO2</text>
        <dbReference type="Rhea" id="RHEA:42624"/>
        <dbReference type="ChEBI" id="CHEBI:15377"/>
        <dbReference type="ChEBI" id="CHEBI:15378"/>
        <dbReference type="ChEBI" id="CHEBI:16526"/>
        <dbReference type="ChEBI" id="CHEBI:28938"/>
        <dbReference type="ChEBI" id="CHEBI:59891"/>
        <dbReference type="ChEBI" id="CHEBI:59894"/>
        <dbReference type="EC" id="3.5.1.110"/>
    </reaction>
</comment>
<comment type="catalytic activity">
    <reaction evidence="1">
        <text>(Z)-3-ureidoacrylate + H2O = (Z)-3-aminoacrylate + carbamate + H(+)</text>
        <dbReference type="Rhea" id="RHEA:31603"/>
        <dbReference type="ChEBI" id="CHEBI:13941"/>
        <dbReference type="ChEBI" id="CHEBI:15377"/>
        <dbReference type="ChEBI" id="CHEBI:15378"/>
        <dbReference type="ChEBI" id="CHEBI:59891"/>
        <dbReference type="ChEBI" id="CHEBI:59894"/>
    </reaction>
</comment>
<comment type="catalytic activity">
    <reaction evidence="1">
        <text>(Z)-2-methylureidoacrylate + H2O + H(+) = (Z)-2-methylaminoacrylate + NH4(+) + CO2</text>
        <dbReference type="Rhea" id="RHEA:42620"/>
        <dbReference type="ChEBI" id="CHEBI:15377"/>
        <dbReference type="ChEBI" id="CHEBI:15378"/>
        <dbReference type="ChEBI" id="CHEBI:16526"/>
        <dbReference type="ChEBI" id="CHEBI:28938"/>
        <dbReference type="ChEBI" id="CHEBI:143783"/>
        <dbReference type="ChEBI" id="CHEBI:145735"/>
        <dbReference type="EC" id="3.5.1.110"/>
    </reaction>
</comment>
<comment type="similarity">
    <text evidence="1">Belongs to the isochorismatase family. RutB subfamily.</text>
</comment>
<accession>D5VGV1</accession>
<reference key="1">
    <citation type="journal article" date="2011" name="J. Bacteriol.">
        <title>Genome sequences of eight morphologically diverse alphaproteobacteria.</title>
        <authorList>
            <consortium name="US DOE Joint Genome Institute"/>
            <person name="Brown P.J."/>
            <person name="Kysela D.T."/>
            <person name="Buechlein A."/>
            <person name="Hemmerich C."/>
            <person name="Brun Y.V."/>
        </authorList>
    </citation>
    <scope>NUCLEOTIDE SEQUENCE [LARGE SCALE GENOMIC DNA]</scope>
    <source>
        <strain>ATCC 21756 / DSM 7131 / JCM 7823 / NBRC 15250 / LMG 17158 / TK0059</strain>
    </source>
</reference>
<protein>
    <recommendedName>
        <fullName evidence="1">Ureidoacrylate amidohydrolase RutB</fullName>
        <ecNumber evidence="1">3.5.1.110</ecNumber>
    </recommendedName>
</protein>
<dbReference type="EC" id="3.5.1.110" evidence="1"/>
<dbReference type="EMBL" id="CP002008">
    <property type="protein sequence ID" value="ADG10544.1"/>
    <property type="molecule type" value="Genomic_DNA"/>
</dbReference>
<dbReference type="RefSeq" id="WP_013079199.1">
    <property type="nucleotide sequence ID" value="NC_014100.1"/>
</dbReference>
<dbReference type="SMR" id="D5VGV1"/>
<dbReference type="STRING" id="509190.Cseg_2078"/>
<dbReference type="KEGG" id="cse:Cseg_2078"/>
<dbReference type="eggNOG" id="COG1335">
    <property type="taxonomic scope" value="Bacteria"/>
</dbReference>
<dbReference type="HOGENOM" id="CLU_068979_8_0_5"/>
<dbReference type="Proteomes" id="UP000002629">
    <property type="component" value="Chromosome"/>
</dbReference>
<dbReference type="GO" id="GO:0016811">
    <property type="term" value="F:hydrolase activity, acting on carbon-nitrogen (but not peptide) bonds, in linear amides"/>
    <property type="evidence" value="ECO:0007669"/>
    <property type="project" value="UniProtKB-UniRule"/>
</dbReference>
<dbReference type="GO" id="GO:0019740">
    <property type="term" value="P:nitrogen utilization"/>
    <property type="evidence" value="ECO:0007669"/>
    <property type="project" value="UniProtKB-UniRule"/>
</dbReference>
<dbReference type="GO" id="GO:0006212">
    <property type="term" value="P:uracil catabolic process"/>
    <property type="evidence" value="ECO:0007669"/>
    <property type="project" value="UniProtKB-UniRule"/>
</dbReference>
<dbReference type="CDD" id="cd00431">
    <property type="entry name" value="cysteine_hydrolases"/>
    <property type="match status" value="1"/>
</dbReference>
<dbReference type="Gene3D" id="3.40.50.850">
    <property type="entry name" value="Isochorismatase-like"/>
    <property type="match status" value="1"/>
</dbReference>
<dbReference type="HAMAP" id="MF_00830">
    <property type="entry name" value="RutB"/>
    <property type="match status" value="1"/>
</dbReference>
<dbReference type="InterPro" id="IPR000868">
    <property type="entry name" value="Isochorismatase-like_dom"/>
</dbReference>
<dbReference type="InterPro" id="IPR050272">
    <property type="entry name" value="Isochorismatase-like_hydrls"/>
</dbReference>
<dbReference type="InterPro" id="IPR036380">
    <property type="entry name" value="Isochorismatase-like_sf"/>
</dbReference>
<dbReference type="InterPro" id="IPR019916">
    <property type="entry name" value="RutB"/>
</dbReference>
<dbReference type="NCBIfam" id="TIGR03614">
    <property type="entry name" value="RutB"/>
    <property type="match status" value="1"/>
</dbReference>
<dbReference type="PANTHER" id="PTHR43540:SF6">
    <property type="entry name" value="ISOCHORISMATASE-LIKE DOMAIN-CONTAINING PROTEIN"/>
    <property type="match status" value="1"/>
</dbReference>
<dbReference type="PANTHER" id="PTHR43540">
    <property type="entry name" value="PEROXYUREIDOACRYLATE/UREIDOACRYLATE AMIDOHYDROLASE-RELATED"/>
    <property type="match status" value="1"/>
</dbReference>
<dbReference type="Pfam" id="PF00857">
    <property type="entry name" value="Isochorismatase"/>
    <property type="match status" value="1"/>
</dbReference>
<dbReference type="SUPFAM" id="SSF52499">
    <property type="entry name" value="Isochorismatase-like hydrolases"/>
    <property type="match status" value="1"/>
</dbReference>
<sequence>MSSPITPLSPGCVMLPARPEPVPVDPKTTAVIVIDMQNAYASPGGYLDLAGFDISGAAKVIHEIKGVLEVARSAGMQVIYFQNGWDDQYVEAGGPGSPNWWKSNALKTMRAKPELQGKLLARGQWDYELVDELKPQPGDIQLHKTRYSGFFNSQLDSVLRARGIRHLVFVGIATNVCVESTLRDGFFLEYFGTVLEDATHQAGPEFVQKAALFNIESFFGWVSTTADFKGTFGQLAPRT</sequence>
<organism>
    <name type="scientific">Caulobacter segnis (strain ATCC 21756 / DSM 7131 / JCM 7823 / NBRC 15250 / LMG 17158 / TK0059)</name>
    <name type="common">Mycoplana segnis</name>
    <dbReference type="NCBI Taxonomy" id="509190"/>
    <lineage>
        <taxon>Bacteria</taxon>
        <taxon>Pseudomonadati</taxon>
        <taxon>Pseudomonadota</taxon>
        <taxon>Alphaproteobacteria</taxon>
        <taxon>Caulobacterales</taxon>
        <taxon>Caulobacteraceae</taxon>
        <taxon>Caulobacter</taxon>
    </lineage>
</organism>
<name>RUTB_CAUST</name>
<proteinExistence type="inferred from homology"/>
<evidence type="ECO:0000255" key="1">
    <source>
        <dbReference type="HAMAP-Rule" id="MF_00830"/>
    </source>
</evidence>
<feature type="chain" id="PRO_0000402650" description="Ureidoacrylate amidohydrolase RutB">
    <location>
        <begin position="1"/>
        <end position="239"/>
    </location>
</feature>
<feature type="active site" description="Proton acceptor" evidence="1">
    <location>
        <position position="35"/>
    </location>
</feature>
<feature type="active site" evidence="1">
    <location>
        <position position="144"/>
    </location>
</feature>
<feature type="active site" description="Nucleophile" evidence="1">
    <location>
        <position position="177"/>
    </location>
</feature>
<keyword id="KW-0378">Hydrolase</keyword>
<gene>
    <name evidence="1" type="primary">rutB</name>
    <name type="ordered locus">Cseg_2078</name>
</gene>